<accession>A7J2C6</accession>
<comment type="function">
    <text evidence="3 4 5">Acetylesterase that acts as an exo-deacetylase (PubMed:24140638). Shows activity towards naphtyl acetate, triacetin, as well as towards glucose- and xylose acetates (PubMed:18978092, Ref.2). Liberates acetic acid from xylo-oligomers (PubMed:18978092, PubMed:24140638, Ref.2).</text>
</comment>
<comment type="catalytic activity">
    <reaction evidence="3 4 5">
        <text>an acetyl ester + H2O = an aliphatic alcohol + acetate + H(+)</text>
        <dbReference type="Rhea" id="RHEA:12957"/>
        <dbReference type="ChEBI" id="CHEBI:2571"/>
        <dbReference type="ChEBI" id="CHEBI:15377"/>
        <dbReference type="ChEBI" id="CHEBI:15378"/>
        <dbReference type="ChEBI" id="CHEBI:30089"/>
        <dbReference type="ChEBI" id="CHEBI:47622"/>
        <dbReference type="EC" id="3.1.1.6"/>
    </reaction>
</comment>
<comment type="biophysicochemical properties">
    <kinetics>
        <KM evidence="3">0.23 mM for 4-nitrophenyl acetate</KM>
        <Vmax evidence="3">20.5 umol/min/mg enzyme toward 4-nitrophenyl acetate</Vmax>
    </kinetics>
    <phDependence>
        <text evidence="5">Optimum pH is 5.5.</text>
    </phDependence>
    <temperatureDependence>
        <text evidence="5">Optimum temperature is 50 degrees Celsius.</text>
    </temperatureDependence>
</comment>
<comment type="subcellular location">
    <subcellularLocation>
        <location evidence="9">Secreted</location>
    </subcellularLocation>
</comment>
<comment type="induction">
    <text evidence="3">Expression is induced by sophorose, cellulose, oat spelt xylan, lactose, and arabinose.</text>
</comment>
<comment type="PTM">
    <text evidence="3">N-glycosylated.</text>
</comment>
<comment type="similarity">
    <text evidence="9">Belongs to the carbohydrate esterase CE16 family.</text>
</comment>
<gene>
    <name evidence="6" type="primary">aes1</name>
    <name evidence="7" type="synonym">TrAE</name>
</gene>
<feature type="signal peptide" evidence="1">
    <location>
        <begin position="1"/>
        <end position="16"/>
    </location>
</feature>
<feature type="chain" id="PRO_5002710640" description="Acetylesterase">
    <location>
        <begin position="17"/>
        <end position="348"/>
    </location>
</feature>
<feature type="glycosylation site" description="N-linked (GlcNAc...) asparagine" evidence="2">
    <location>
        <position position="64"/>
    </location>
</feature>
<feature type="glycosylation site" description="N-linked (GlcNAc...) asparagine" evidence="2">
    <location>
        <position position="165"/>
    </location>
</feature>
<feature type="glycosylation site" description="N-linked (GlcNAc...) asparagine" evidence="2">
    <location>
        <position position="218"/>
    </location>
</feature>
<feature type="glycosylation site" description="N-linked (GlcNAc...) asparagine" evidence="2">
    <location>
        <position position="223"/>
    </location>
</feature>
<feature type="glycosylation site" description="N-linked (GlcNAc...) asparagine" evidence="2">
    <location>
        <position position="297"/>
    </location>
</feature>
<proteinExistence type="evidence at protein level"/>
<sequence length="348" mass="39158">MRSILVIPSFVAVLNAFSLFPKPHDDFKYLITFGDSYTDNGRLGYYGSHQAHGPPPGVMPPEANVTASGGLQWPQYVEASTGATLYDYAIAGATCDNNNVERWAAFMNANYPSIITDEIPSFKADRKTKLYRGVTSANTVYALWIGTNDLSYTGILSDSQVKGTNITTYIDCLWNVFDAIHAAGGRRFVILNNNALQLTGLYRPLSDGGAGDNQFWQNKTLYNQTEYAQKMLEYTTSSNTMIDYGVPFHLLVKNRWPGSKVAVYDIHSLIMDIYNQPSRYLEPPHNVVGYYKHCDVNGTNCLYGPGRLDSYLWYDELHPSNIIASYIAREFLNVVSGRSKYGTYWEHW</sequence>
<organism>
    <name type="scientific">Hypocrea jecorina</name>
    <name type="common">Trichoderma reesei</name>
    <dbReference type="NCBI Taxonomy" id="51453"/>
    <lineage>
        <taxon>Eukaryota</taxon>
        <taxon>Fungi</taxon>
        <taxon>Dikarya</taxon>
        <taxon>Ascomycota</taxon>
        <taxon>Pezizomycotina</taxon>
        <taxon>Sordariomycetes</taxon>
        <taxon>Hypocreomycetidae</taxon>
        <taxon>Hypocreales</taxon>
        <taxon>Hypocreaceae</taxon>
        <taxon>Trichoderma</taxon>
    </lineage>
</organism>
<dbReference type="EC" id="3.1.1.6" evidence="3 4 5"/>
<dbReference type="EMBL" id="DQ866149">
    <property type="protein sequence ID" value="ABI34466.1"/>
    <property type="molecule type" value="Genomic_DNA"/>
</dbReference>
<dbReference type="SMR" id="A7J2C6"/>
<dbReference type="GlyCosmos" id="A7J2C6">
    <property type="glycosylation" value="5 sites, No reported glycans"/>
</dbReference>
<dbReference type="BRENDA" id="3.1.1.6">
    <property type="organism ID" value="6451"/>
</dbReference>
<dbReference type="GO" id="GO:0005576">
    <property type="term" value="C:extracellular region"/>
    <property type="evidence" value="ECO:0007669"/>
    <property type="project" value="UniProtKB-SubCell"/>
</dbReference>
<dbReference type="GO" id="GO:0008126">
    <property type="term" value="F:acetylesterase activity"/>
    <property type="evidence" value="ECO:0007669"/>
    <property type="project" value="UniProtKB-EC"/>
</dbReference>
<dbReference type="CDD" id="cd01846">
    <property type="entry name" value="fatty_acyltransferase_like"/>
    <property type="match status" value="1"/>
</dbReference>
<dbReference type="Gene3D" id="3.40.50.1110">
    <property type="entry name" value="SGNH hydrolase"/>
    <property type="match status" value="1"/>
</dbReference>
<dbReference type="InterPro" id="IPR001087">
    <property type="entry name" value="GDSL"/>
</dbReference>
<dbReference type="InterPro" id="IPR051058">
    <property type="entry name" value="GDSL_Est/Lipase"/>
</dbReference>
<dbReference type="InterPro" id="IPR036514">
    <property type="entry name" value="SGNH_hydro_sf"/>
</dbReference>
<dbReference type="PANTHER" id="PTHR45648">
    <property type="entry name" value="GDSL LIPASE/ACYLHYDROLASE FAMILY PROTEIN (AFU_ORTHOLOGUE AFUA_4G14700)"/>
    <property type="match status" value="1"/>
</dbReference>
<dbReference type="PANTHER" id="PTHR45648:SF22">
    <property type="entry name" value="GDSL LIPASE_ACYLHYDROLASE FAMILY PROTEIN (AFU_ORTHOLOGUE AFUA_4G14700)"/>
    <property type="match status" value="1"/>
</dbReference>
<dbReference type="Pfam" id="PF00657">
    <property type="entry name" value="Lipase_GDSL"/>
    <property type="match status" value="1"/>
</dbReference>
<dbReference type="SUPFAM" id="SSF52266">
    <property type="entry name" value="SGNH hydrolase"/>
    <property type="match status" value="1"/>
</dbReference>
<name>AES1_HYPJE</name>
<reference key="1">
    <citation type="journal article" date="2008" name="Appl. Environ. Microbiol.">
        <title>Novel family of carbohydrate esterases, based on identification of the Hypocrea jecorina acetyl esterase gene.</title>
        <authorList>
            <person name="Li X.L."/>
            <person name="Skory C.D."/>
            <person name="Cotta M.A."/>
            <person name="Puchart V."/>
            <person name="Biely P."/>
        </authorList>
    </citation>
    <scope>NUCLEOTIDE SEQUENCE [GENOMIC DNA]</scope>
    <scope>INDUCTION</scope>
    <scope>GLYCOSYLATION</scope>
    <scope>FUNCTION</scope>
    <scope>CATALYTIC ACTIVITY</scope>
    <source>
        <strain>ATCC 56765 / Rut C-30</strain>
    </source>
</reference>
<reference key="2">
    <citation type="journal article" date="1987" name="Appl. Microbiol. Biotechnol.">
        <title>An acetyl esterase of Trichoderma reesei and its role in the hydrolysis of acetyl xylans.</title>
        <authorList>
            <person name="Poutanen K."/>
            <person name="Sundberg M."/>
        </authorList>
    </citation>
    <scope>FUNCTION</scope>
    <scope>CATALYTIC ACTIVITY</scope>
    <scope>BIOPHYSICOCHEMICAL PROPERTIES</scope>
    <source>
        <strain>ATCC 56765 / Rut C-30</strain>
    </source>
</reference>
<reference key="3">
    <citation type="journal article" date="2013" name="J. Biotechnol.">
        <title>Distinct roles of carbohydrate esterase family CE16 acetyl esterases and polymer-acting acetyl xylan esterases in xylan deacetylation.</title>
        <authorList>
            <person name="Koutaniemi S."/>
            <person name="van Gool M.P."/>
            <person name="Juvonen M."/>
            <person name="Jokela J."/>
            <person name="Hinz S.W."/>
            <person name="Schols H.A."/>
            <person name="Tenkanen M."/>
        </authorList>
    </citation>
    <scope>FUNCTION</scope>
    <scope>CATALYTIC ACTIVITY</scope>
    <source>
        <strain>ATCC 56765 / Rut C-30</strain>
    </source>
</reference>
<protein>
    <recommendedName>
        <fullName evidence="8">Acetylesterase</fullName>
        <ecNumber evidence="3 4 5">3.1.1.6</ecNumber>
    </recommendedName>
    <alternativeName>
        <fullName evidence="7">Carbohydrate esterase family 16 protein</fullName>
    </alternativeName>
</protein>
<evidence type="ECO:0000255" key="1"/>
<evidence type="ECO:0000255" key="2">
    <source>
        <dbReference type="PROSITE-ProRule" id="PRU00498"/>
    </source>
</evidence>
<evidence type="ECO:0000269" key="3">
    <source>
    </source>
</evidence>
<evidence type="ECO:0000269" key="4">
    <source>
    </source>
</evidence>
<evidence type="ECO:0000269" key="5">
    <source ref="2"/>
</evidence>
<evidence type="ECO:0000303" key="6">
    <source>
    </source>
</evidence>
<evidence type="ECO:0000303" key="7">
    <source>
    </source>
</evidence>
<evidence type="ECO:0000303" key="8">
    <source ref="2"/>
</evidence>
<evidence type="ECO:0000305" key="9"/>
<keyword id="KW-0325">Glycoprotein</keyword>
<keyword id="KW-0378">Hydrolase</keyword>
<keyword id="KW-0964">Secreted</keyword>
<keyword id="KW-0732">Signal</keyword>